<reference key="1">
    <citation type="journal article" date="2008" name="Genome Biol.">
        <title>The genome sequence of the model ascomycete fungus Podospora anserina.</title>
        <authorList>
            <person name="Espagne E."/>
            <person name="Lespinet O."/>
            <person name="Malagnac F."/>
            <person name="Da Silva C."/>
            <person name="Jaillon O."/>
            <person name="Porcel B.M."/>
            <person name="Couloux A."/>
            <person name="Aury J.-M."/>
            <person name="Segurens B."/>
            <person name="Poulain J."/>
            <person name="Anthouard V."/>
            <person name="Grossetete S."/>
            <person name="Khalili H."/>
            <person name="Coppin E."/>
            <person name="Dequard-Chablat M."/>
            <person name="Picard M."/>
            <person name="Contamine V."/>
            <person name="Arnaise S."/>
            <person name="Bourdais A."/>
            <person name="Berteaux-Lecellier V."/>
            <person name="Gautheret D."/>
            <person name="de Vries R.P."/>
            <person name="Battaglia E."/>
            <person name="Coutinho P.M."/>
            <person name="Danchin E.G.J."/>
            <person name="Henrissat B."/>
            <person name="El Khoury R."/>
            <person name="Sainsard-Chanet A."/>
            <person name="Boivin A."/>
            <person name="Pinan-Lucarre B."/>
            <person name="Sellem C.H."/>
            <person name="Debuchy R."/>
            <person name="Wincker P."/>
            <person name="Weissenbach J."/>
            <person name="Silar P."/>
        </authorList>
    </citation>
    <scope>NUCLEOTIDE SEQUENCE [LARGE SCALE GENOMIC DNA]</scope>
    <source>
        <strain>S / ATCC MYA-4624 / DSM 980 / FGSC 10383</strain>
    </source>
</reference>
<reference key="2">
    <citation type="journal article" date="2014" name="Genetics">
        <title>Maintaining two mating types: Structure of the mating type locus and its role in heterokaryosis in Podospora anserina.</title>
        <authorList>
            <person name="Grognet P."/>
            <person name="Bidard F."/>
            <person name="Kuchly C."/>
            <person name="Tong L.C.H."/>
            <person name="Coppin E."/>
            <person name="Benkhali J.A."/>
            <person name="Couloux A."/>
            <person name="Wincker P."/>
            <person name="Debuchy R."/>
            <person name="Silar P."/>
        </authorList>
    </citation>
    <scope>GENOME REANNOTATION</scope>
    <source>
        <strain>S / ATCC MYA-4624 / DSM 980 / FGSC 10383</strain>
    </source>
</reference>
<reference key="3">
    <citation type="journal article" date="2015" name="Biotechnol. Biofuels">
        <title>Substrate specificity and regioselectivity of fungal AA9 lytic polysaccharide monooxygenases secreted by Podospora anserina.</title>
        <authorList>
            <person name="Bennati-Granier C."/>
            <person name="Garajova S."/>
            <person name="Champion C."/>
            <person name="Grisel S."/>
            <person name="Haon M."/>
            <person name="Zhou S."/>
            <person name="Fanuel M."/>
            <person name="Ropartz D."/>
            <person name="Rogniaux H."/>
            <person name="Gimbert I."/>
            <person name="Record E."/>
            <person name="Berrin J.G."/>
        </authorList>
    </citation>
    <scope>FUNCTION</scope>
    <scope>CATALYTIC ACTIVITY</scope>
    <scope>DOMAIN</scope>
</reference>
<reference key="4">
    <citation type="journal article" date="2016" name="Sci. Rep.">
        <title>Single-domain flavoenzymes trigger lytic polysaccharide monooxygenases for oxidative degradation of cellulose.</title>
        <authorList>
            <person name="Garajova S."/>
            <person name="Mathieu Y."/>
            <person name="Beccia M.R."/>
            <person name="Bennati-Granier C."/>
            <person name="Biaso F."/>
            <person name="Fanuel M."/>
            <person name="Ropartz D."/>
            <person name="Guigliarelli B."/>
            <person name="Record E."/>
            <person name="Rogniaux H."/>
            <person name="Henrissat B."/>
            <person name="Berrin J.G."/>
        </authorList>
    </citation>
    <scope>FUNCTION</scope>
    <scope>CATALYTIC ACTIVITY</scope>
    <scope>ACTIVITY REGULATION</scope>
    <scope>BIOTECHNOLOGY</scope>
</reference>
<reference key="5">
    <citation type="journal article" date="2017" name="Sci. Rep.">
        <title>Action of lytic polysaccharide monooxygenase on plant tissue is governed by cellular type.</title>
        <authorList>
            <person name="Chabbert B."/>
            <person name="Habrant A."/>
            <person name="Herbaut M."/>
            <person name="Foulon L."/>
            <person name="Aguie-Beghin V."/>
            <person name="Garajova S."/>
            <person name="Grisel S."/>
            <person name="Bennati-Granier C."/>
            <person name="Gimbert-Herpoel I."/>
            <person name="Jamme F."/>
            <person name="Refregiers M."/>
            <person name="Sandt C."/>
            <person name="Berrin J.G."/>
            <person name="Paes G."/>
        </authorList>
    </citation>
    <scope>FUNCTION</scope>
    <scope>CATALYTIC ACTIVITY</scope>
    <scope>SUBCELLULAR LOCATION</scope>
    <scope>BIOTECHNOLOGY</scope>
</reference>
<protein>
    <recommendedName>
        <fullName evidence="8">AA9 family lytic polysaccharide monooxygenase E</fullName>
        <shortName evidence="8">LPMO9E</shortName>
        <ecNumber evidence="5 6 7">1.14.99.56</ecNumber>
    </recommendedName>
    <alternativeName>
        <fullName evidence="9">Cellulase LPMO9E</fullName>
    </alternativeName>
    <alternativeName>
        <fullName evidence="9">Endo-beta-1,4-glucanase LPMO9E</fullName>
        <shortName evidence="9">Endoglucanase LPMO9E</shortName>
    </alternativeName>
    <alternativeName>
        <fullName evidence="9">Glycosyl hydrolase 61 family protein LPMO9E</fullName>
    </alternativeName>
</protein>
<proteinExistence type="evidence at protein level"/>
<organism>
    <name type="scientific">Podospora anserina (strain S / ATCC MYA-4624 / DSM 980 / FGSC 10383)</name>
    <name type="common">Pleurage anserina</name>
    <dbReference type="NCBI Taxonomy" id="515849"/>
    <lineage>
        <taxon>Eukaryota</taxon>
        <taxon>Fungi</taxon>
        <taxon>Dikarya</taxon>
        <taxon>Ascomycota</taxon>
        <taxon>Pezizomycotina</taxon>
        <taxon>Sordariomycetes</taxon>
        <taxon>Sordariomycetidae</taxon>
        <taxon>Sordariales</taxon>
        <taxon>Podosporaceae</taxon>
        <taxon>Podospora</taxon>
        <taxon>Podospora anserina</taxon>
    </lineage>
</organism>
<gene>
    <name evidence="8" type="primary">LPMO9E</name>
    <name type="ORF">PODANS_1_16300</name>
</gene>
<dbReference type="EC" id="1.14.99.56" evidence="5 6 7"/>
<dbReference type="EMBL" id="CU633899">
    <property type="protein sequence ID" value="CAP67740.1"/>
    <property type="molecule type" value="Genomic_DNA"/>
</dbReference>
<dbReference type="EMBL" id="FO904936">
    <property type="protein sequence ID" value="CDP23998.1"/>
    <property type="molecule type" value="Genomic_DNA"/>
</dbReference>
<dbReference type="RefSeq" id="XP_001907069.1">
    <property type="nucleotide sequence ID" value="XM_001907034.1"/>
</dbReference>
<dbReference type="SMR" id="B2ATL7"/>
<dbReference type="STRING" id="515849.B2ATL7"/>
<dbReference type="CAZy" id="AA9">
    <property type="family name" value="Auxiliary Activities 9"/>
</dbReference>
<dbReference type="CAZy" id="CBM1">
    <property type="family name" value="Carbohydrate-Binding Module Family 1"/>
</dbReference>
<dbReference type="GeneID" id="6191260"/>
<dbReference type="KEGG" id="pan:PODANSg4102"/>
<dbReference type="VEuPathDB" id="FungiDB:PODANS_1_16300"/>
<dbReference type="eggNOG" id="ENOG502SJNZ">
    <property type="taxonomic scope" value="Eukaryota"/>
</dbReference>
<dbReference type="HOGENOM" id="CLU_031730_4_2_1"/>
<dbReference type="OrthoDB" id="6038816at2759"/>
<dbReference type="Proteomes" id="UP000001197">
    <property type="component" value="Chromosome 1"/>
</dbReference>
<dbReference type="GO" id="GO:0005576">
    <property type="term" value="C:extracellular region"/>
    <property type="evidence" value="ECO:0007669"/>
    <property type="project" value="UniProtKB-SubCell"/>
</dbReference>
<dbReference type="GO" id="GO:0030248">
    <property type="term" value="F:cellulose binding"/>
    <property type="evidence" value="ECO:0007669"/>
    <property type="project" value="InterPro"/>
</dbReference>
<dbReference type="GO" id="GO:0046872">
    <property type="term" value="F:metal ion binding"/>
    <property type="evidence" value="ECO:0007669"/>
    <property type="project" value="UniProtKB-KW"/>
</dbReference>
<dbReference type="GO" id="GO:0004497">
    <property type="term" value="F:monooxygenase activity"/>
    <property type="evidence" value="ECO:0007669"/>
    <property type="project" value="UniProtKB-KW"/>
</dbReference>
<dbReference type="GO" id="GO:0030245">
    <property type="term" value="P:cellulose catabolic process"/>
    <property type="evidence" value="ECO:0007669"/>
    <property type="project" value="UniProtKB-KW"/>
</dbReference>
<dbReference type="CDD" id="cd21175">
    <property type="entry name" value="LPMO_AA9"/>
    <property type="match status" value="1"/>
</dbReference>
<dbReference type="Gene3D" id="2.70.50.70">
    <property type="match status" value="1"/>
</dbReference>
<dbReference type="InterPro" id="IPR049892">
    <property type="entry name" value="AA9"/>
</dbReference>
<dbReference type="InterPro" id="IPR005103">
    <property type="entry name" value="AA9_LPMO"/>
</dbReference>
<dbReference type="InterPro" id="IPR035971">
    <property type="entry name" value="CBD_sf"/>
</dbReference>
<dbReference type="InterPro" id="IPR000254">
    <property type="entry name" value="Cellulose-bd_dom_fun"/>
</dbReference>
<dbReference type="PANTHER" id="PTHR33353:SF11">
    <property type="entry name" value="GLYCOSYLHYDROLASE FAMILY 61-7 PROTEIN"/>
    <property type="match status" value="1"/>
</dbReference>
<dbReference type="PANTHER" id="PTHR33353">
    <property type="entry name" value="PUTATIVE (AFU_ORTHOLOGUE AFUA_1G12560)-RELATED"/>
    <property type="match status" value="1"/>
</dbReference>
<dbReference type="Pfam" id="PF03443">
    <property type="entry name" value="AA9"/>
    <property type="match status" value="1"/>
</dbReference>
<dbReference type="Pfam" id="PF00734">
    <property type="entry name" value="CBM_1"/>
    <property type="match status" value="1"/>
</dbReference>
<dbReference type="SMART" id="SM00236">
    <property type="entry name" value="fCBD"/>
    <property type="match status" value="1"/>
</dbReference>
<dbReference type="SUPFAM" id="SSF57180">
    <property type="entry name" value="Cellulose-binding domain"/>
    <property type="match status" value="1"/>
</dbReference>
<dbReference type="PROSITE" id="PS00562">
    <property type="entry name" value="CBM1_1"/>
    <property type="match status" value="1"/>
</dbReference>
<dbReference type="PROSITE" id="PS51164">
    <property type="entry name" value="CBM1_2"/>
    <property type="match status" value="1"/>
</dbReference>
<feature type="signal peptide" evidence="3">
    <location>
        <begin position="1"/>
        <end position="19"/>
    </location>
</feature>
<feature type="chain" id="PRO_5007639164" description="AA9 family lytic polysaccharide monooxygenase E">
    <location>
        <begin position="20"/>
        <end position="293"/>
    </location>
</feature>
<feature type="domain" description="CBM1" evidence="4">
    <location>
        <begin position="257"/>
        <end position="293"/>
    </location>
</feature>
<feature type="binding site" evidence="1">
    <location>
        <position position="20"/>
    </location>
    <ligand>
        <name>Cu(2+)</name>
        <dbReference type="ChEBI" id="CHEBI:29036"/>
        <note>catalytic</note>
    </ligand>
</feature>
<feature type="binding site" evidence="1">
    <location>
        <position position="90"/>
    </location>
    <ligand>
        <name>Cu(2+)</name>
        <dbReference type="ChEBI" id="CHEBI:29036"/>
        <note>catalytic</note>
    </ligand>
</feature>
<feature type="binding site" evidence="1">
    <location>
        <position position="158"/>
    </location>
    <ligand>
        <name>O2</name>
        <dbReference type="ChEBI" id="CHEBI:15379"/>
    </ligand>
</feature>
<feature type="binding site" evidence="1">
    <location>
        <position position="167"/>
    </location>
    <ligand>
        <name>O2</name>
        <dbReference type="ChEBI" id="CHEBI:15379"/>
    </ligand>
</feature>
<feature type="binding site" evidence="1">
    <location>
        <position position="169"/>
    </location>
    <ligand>
        <name>Cu(2+)</name>
        <dbReference type="ChEBI" id="CHEBI:29036"/>
        <note>catalytic</note>
    </ligand>
</feature>
<feature type="disulfide bond" evidence="2">
    <location>
        <begin position="59"/>
        <end position="172"/>
    </location>
</feature>
<comment type="function">
    <text evidence="5 6 7">Lytic polysaccharide monooxygenase (LPMO) that depolymerizes crystalline and amorphous polysaccharides via the oxidation of scissile alpha- or beta-(1-4)-glycosidic bonds, yielding only C1 oxidation products (PubMed:26136828, PubMed:27312718, PubMed:29259205). Catalysis by LPMOs requires the reduction of the active-site copper from Cu(II) to Cu(I) by a reducing agent and H(2)O(2) or O(2) as a cosubstrate (PubMed:26136828). Improves the progression of lytic enzymes in delignified miscanthus cell walls (PubMed:29259205). This boosting effect dependents on the cellular type which indicates contrasted recalcitrance levels in plant tissues (PubMed:29259205).</text>
</comment>
<comment type="catalytic activity">
    <reaction evidence="5 6 7">
        <text>[(1-&gt;4)-beta-D-glucosyl]n+m + reduced acceptor + O2 = 4-dehydro-beta-D-glucosyl-[(1-&gt;4)-beta-D-glucosyl]n-1 + [(1-&gt;4)-beta-D-glucosyl]m + acceptor + H2O.</text>
        <dbReference type="EC" id="1.14.99.56"/>
    </reaction>
</comment>
<comment type="cofactor">
    <cofactor evidence="1">
        <name>Cu(2+)</name>
        <dbReference type="ChEBI" id="CHEBI:29036"/>
    </cofactor>
    <text evidence="1">Binds 1 copper ion per subunit.</text>
</comment>
<comment type="activity regulation">
    <text evidence="6">Glucose dehydrogenase and aryl-alcohol quinone oxidoreductases regulate the oxidative degradation of cellulose since they can act as catalytically efficient electron donors for LPMO9E.</text>
</comment>
<comment type="subcellular location">
    <subcellularLocation>
        <location evidence="7">Secreted</location>
    </subcellularLocation>
</comment>
<comment type="domain">
    <text evidence="5">Has a modular structure: an endo-beta-1,4-glucanase catalytic module at the N-terminus, a linker rich in serines and threonines, and a C-terminal carbohydrate-binding module (CBM). The CBM domain is essential for binding to and subsequent oxidative degradation of polysaccharide substrate.</text>
</comment>
<comment type="biotechnology">
    <text evidence="6 7">Lignocellulose is the most abundant polymeric composite on Earth and is a recalcitrant but promising renewable substrate for industrial biotechnology applications. Together with cellobiose dehydrogenases (CDHs) an enzymatic system capable of oxidative cellulose cleavage is formed, which increases the efficiency of cellulases and put LPMOs at focus of biofuel research (PubMed:27312718, PubMed:29259205). Glucose dehydrogenase and aryl-alcohol quinone oxidoreductases are also catalytically efficient electron donors for LPMO9E and can replace CDHs (PubMed:27312718).</text>
</comment>
<comment type="similarity">
    <text evidence="9">Belongs to the polysaccharide monooxygenase AA9 family.</text>
</comment>
<accession>B2ATL7</accession>
<sequence length="293" mass="30489">MKGLLSVAALSLAVSEVSAHYIFQQLSTGSTKHGVFQYIRQNTNYNSPVTDLSSNDLRCNEGGASGANTQTVTVRAGDSFTFHLDTPVYHQGPVSVYLSKAPGSASSYDGSGTWFKIKDWGPTFPGGQWTLAGSYTAQLPSCITDGEYLLRIQSLGIHNPYPAGTPQFYISCAQIKVTGGGSVNPSGVAIPGAFKATDPGYTANIYSNFNSYTVPGPSVFSCGSNGGGSSPVEPQPQPTTTLVTSTRAPVATQPAGCAVAKWGQCGGNGWTGCTTCAAGSTCNTQNAYYHQCV</sequence>
<evidence type="ECO:0000250" key="1">
    <source>
        <dbReference type="UniProtKB" id="Q1K8B6"/>
    </source>
</evidence>
<evidence type="ECO:0000250" key="2">
    <source>
        <dbReference type="UniProtKB" id="Q4WP32"/>
    </source>
</evidence>
<evidence type="ECO:0000255" key="3"/>
<evidence type="ECO:0000255" key="4">
    <source>
        <dbReference type="PROSITE-ProRule" id="PRU00597"/>
    </source>
</evidence>
<evidence type="ECO:0000269" key="5">
    <source>
    </source>
</evidence>
<evidence type="ECO:0000269" key="6">
    <source>
    </source>
</evidence>
<evidence type="ECO:0000269" key="7">
    <source>
    </source>
</evidence>
<evidence type="ECO:0000303" key="8">
    <source>
    </source>
</evidence>
<evidence type="ECO:0000305" key="9"/>
<name>LP9E_PODAN</name>
<keyword id="KW-0119">Carbohydrate metabolism</keyword>
<keyword id="KW-0136">Cellulose degradation</keyword>
<keyword id="KW-0186">Copper</keyword>
<keyword id="KW-1015">Disulfide bond</keyword>
<keyword id="KW-0479">Metal-binding</keyword>
<keyword id="KW-0503">Monooxygenase</keyword>
<keyword id="KW-0560">Oxidoreductase</keyword>
<keyword id="KW-0624">Polysaccharide degradation</keyword>
<keyword id="KW-1185">Reference proteome</keyword>
<keyword id="KW-0964">Secreted</keyword>
<keyword id="KW-0732">Signal</keyword>